<gene>
    <name evidence="1" type="primary">der</name>
    <name type="synonym">engA</name>
    <name type="ordered locus">MYPU_0880</name>
</gene>
<protein>
    <recommendedName>
        <fullName evidence="1">GTPase Der</fullName>
    </recommendedName>
    <alternativeName>
        <fullName evidence="1">GTP-binding protein EngA</fullName>
    </alternativeName>
</protein>
<keyword id="KW-0342">GTP-binding</keyword>
<keyword id="KW-0547">Nucleotide-binding</keyword>
<keyword id="KW-1185">Reference proteome</keyword>
<keyword id="KW-0677">Repeat</keyword>
<keyword id="KW-0690">Ribosome biogenesis</keyword>
<dbReference type="EMBL" id="AL445563">
    <property type="protein sequence ID" value="CAC13261.1"/>
    <property type="molecule type" value="Genomic_DNA"/>
</dbReference>
<dbReference type="PIR" id="H90522">
    <property type="entry name" value="H90522"/>
</dbReference>
<dbReference type="RefSeq" id="WP_010924892.1">
    <property type="nucleotide sequence ID" value="NC_002771.1"/>
</dbReference>
<dbReference type="SMR" id="Q98RC1"/>
<dbReference type="STRING" id="272635.gene:17576668"/>
<dbReference type="KEGG" id="mpu:MYPU_0880"/>
<dbReference type="eggNOG" id="COG1160">
    <property type="taxonomic scope" value="Bacteria"/>
</dbReference>
<dbReference type="HOGENOM" id="CLU_016077_6_2_14"/>
<dbReference type="BioCyc" id="MPUL272635:G1GT6-87-MONOMER"/>
<dbReference type="Proteomes" id="UP000000528">
    <property type="component" value="Chromosome"/>
</dbReference>
<dbReference type="GO" id="GO:0005525">
    <property type="term" value="F:GTP binding"/>
    <property type="evidence" value="ECO:0007669"/>
    <property type="project" value="UniProtKB-UniRule"/>
</dbReference>
<dbReference type="GO" id="GO:0043022">
    <property type="term" value="F:ribosome binding"/>
    <property type="evidence" value="ECO:0007669"/>
    <property type="project" value="TreeGrafter"/>
</dbReference>
<dbReference type="GO" id="GO:0042254">
    <property type="term" value="P:ribosome biogenesis"/>
    <property type="evidence" value="ECO:0007669"/>
    <property type="project" value="UniProtKB-KW"/>
</dbReference>
<dbReference type="CDD" id="cd01894">
    <property type="entry name" value="EngA1"/>
    <property type="match status" value="1"/>
</dbReference>
<dbReference type="CDD" id="cd01895">
    <property type="entry name" value="EngA2"/>
    <property type="match status" value="1"/>
</dbReference>
<dbReference type="FunFam" id="3.40.50.300:FF:000040">
    <property type="entry name" value="GTPase Der"/>
    <property type="match status" value="1"/>
</dbReference>
<dbReference type="FunFam" id="3.40.50.300:FF:000057">
    <property type="entry name" value="GTPase Der"/>
    <property type="match status" value="1"/>
</dbReference>
<dbReference type="Gene3D" id="3.30.300.20">
    <property type="match status" value="1"/>
</dbReference>
<dbReference type="Gene3D" id="3.40.50.300">
    <property type="entry name" value="P-loop containing nucleotide triphosphate hydrolases"/>
    <property type="match status" value="2"/>
</dbReference>
<dbReference type="HAMAP" id="MF_00195">
    <property type="entry name" value="GTPase_Der"/>
    <property type="match status" value="1"/>
</dbReference>
<dbReference type="InterPro" id="IPR031166">
    <property type="entry name" value="G_ENGA"/>
</dbReference>
<dbReference type="InterPro" id="IPR006073">
    <property type="entry name" value="GTP-bd"/>
</dbReference>
<dbReference type="InterPro" id="IPR016484">
    <property type="entry name" value="GTPase_Der"/>
</dbReference>
<dbReference type="InterPro" id="IPR032859">
    <property type="entry name" value="KH_dom-like"/>
</dbReference>
<dbReference type="InterPro" id="IPR015946">
    <property type="entry name" value="KH_dom-like_a/b"/>
</dbReference>
<dbReference type="InterPro" id="IPR027417">
    <property type="entry name" value="P-loop_NTPase"/>
</dbReference>
<dbReference type="InterPro" id="IPR005225">
    <property type="entry name" value="Small_GTP-bd"/>
</dbReference>
<dbReference type="InterPro" id="IPR002035">
    <property type="entry name" value="VWF_A"/>
</dbReference>
<dbReference type="NCBIfam" id="TIGR03594">
    <property type="entry name" value="GTPase_EngA"/>
    <property type="match status" value="1"/>
</dbReference>
<dbReference type="NCBIfam" id="TIGR00231">
    <property type="entry name" value="small_GTP"/>
    <property type="match status" value="2"/>
</dbReference>
<dbReference type="PANTHER" id="PTHR43834">
    <property type="entry name" value="GTPASE DER"/>
    <property type="match status" value="1"/>
</dbReference>
<dbReference type="PANTHER" id="PTHR43834:SF6">
    <property type="entry name" value="GTPASE DER"/>
    <property type="match status" value="1"/>
</dbReference>
<dbReference type="Pfam" id="PF14714">
    <property type="entry name" value="KH_dom-like"/>
    <property type="match status" value="1"/>
</dbReference>
<dbReference type="Pfam" id="PF01926">
    <property type="entry name" value="MMR_HSR1"/>
    <property type="match status" value="2"/>
</dbReference>
<dbReference type="PIRSF" id="PIRSF006485">
    <property type="entry name" value="GTP-binding_EngA"/>
    <property type="match status" value="1"/>
</dbReference>
<dbReference type="PRINTS" id="PR00326">
    <property type="entry name" value="GTP1OBG"/>
</dbReference>
<dbReference type="SUPFAM" id="SSF52540">
    <property type="entry name" value="P-loop containing nucleoside triphosphate hydrolases"/>
    <property type="match status" value="2"/>
</dbReference>
<dbReference type="PROSITE" id="PS51712">
    <property type="entry name" value="G_ENGA"/>
    <property type="match status" value="2"/>
</dbReference>
<sequence length="435" mass="49698">MKPLTKNNLVAIVGKPNVGKSTLFNRLVGKRVSIVYDQPGVTRDRIYENINWSGKNFRIIDTGGIVVSDQPFVEQIRIQAQIAIEESEIILFVIDGSEEITSDDLYIASILRNSKKKVLVLANKLDNNKNEDYSIYSLGFEDYYKISSVHGEGIGEVLDKVINLMNFENDQDEDLFKIAILGKPNAGKSSLLNALTKQERSIVSEIAGTTRDSIKSTIEIEDQKFFIIDTAGINRKSKLVESVDHYALMRAMGSLDESDLSIIIIDATEELSHFNARIIGYASDKKKPTIIVINKWDLIKKETNTMIEYEKKLREKMPFISWMPIVFISALKSQRLNKLEKVIIQVKNNLSREIKQNLLNDLLVDMQTMNPLTFKGKKLEIKHIKKTNDPVPTFLLFVNNPNIVHFSYLRYIENQIRDYFDFTGCPINLVLKKNK</sequence>
<reference key="1">
    <citation type="journal article" date="2001" name="Nucleic Acids Res.">
        <title>The complete genome sequence of the murine respiratory pathogen Mycoplasma pulmonis.</title>
        <authorList>
            <person name="Chambaud I."/>
            <person name="Heilig R."/>
            <person name="Ferris S."/>
            <person name="Barbe V."/>
            <person name="Samson D."/>
            <person name="Galisson F."/>
            <person name="Moszer I."/>
            <person name="Dybvig K."/>
            <person name="Wroblewski H."/>
            <person name="Viari A."/>
            <person name="Rocha E.P.C."/>
            <person name="Blanchard A."/>
        </authorList>
    </citation>
    <scope>NUCLEOTIDE SEQUENCE [LARGE SCALE GENOMIC DNA]</scope>
    <source>
        <strain>UAB CTIP</strain>
    </source>
</reference>
<feature type="chain" id="PRO_0000179015" description="GTPase Der">
    <location>
        <begin position="1"/>
        <end position="435"/>
    </location>
</feature>
<feature type="domain" description="EngA-type G 1">
    <location>
        <begin position="8"/>
        <end position="169"/>
    </location>
</feature>
<feature type="domain" description="EngA-type G 2">
    <location>
        <begin position="176"/>
        <end position="351"/>
    </location>
</feature>
<feature type="domain" description="KH-like" evidence="1">
    <location>
        <begin position="352"/>
        <end position="435"/>
    </location>
</feature>
<feature type="binding site" evidence="1">
    <location>
        <begin position="14"/>
        <end position="21"/>
    </location>
    <ligand>
        <name>GTP</name>
        <dbReference type="ChEBI" id="CHEBI:37565"/>
        <label>1</label>
    </ligand>
</feature>
<feature type="binding site" evidence="1">
    <location>
        <begin position="61"/>
        <end position="65"/>
    </location>
    <ligand>
        <name>GTP</name>
        <dbReference type="ChEBI" id="CHEBI:37565"/>
        <label>1</label>
    </ligand>
</feature>
<feature type="binding site" evidence="1">
    <location>
        <begin position="123"/>
        <end position="126"/>
    </location>
    <ligand>
        <name>GTP</name>
        <dbReference type="ChEBI" id="CHEBI:37565"/>
        <label>1</label>
    </ligand>
</feature>
<feature type="binding site" evidence="1">
    <location>
        <begin position="182"/>
        <end position="189"/>
    </location>
    <ligand>
        <name>GTP</name>
        <dbReference type="ChEBI" id="CHEBI:37565"/>
        <label>2</label>
    </ligand>
</feature>
<feature type="binding site" evidence="1">
    <location>
        <begin position="229"/>
        <end position="233"/>
    </location>
    <ligand>
        <name>GTP</name>
        <dbReference type="ChEBI" id="CHEBI:37565"/>
        <label>2</label>
    </ligand>
</feature>
<feature type="binding site" evidence="1">
    <location>
        <begin position="294"/>
        <end position="297"/>
    </location>
    <ligand>
        <name>GTP</name>
        <dbReference type="ChEBI" id="CHEBI:37565"/>
        <label>2</label>
    </ligand>
</feature>
<proteinExistence type="inferred from homology"/>
<evidence type="ECO:0000255" key="1">
    <source>
        <dbReference type="HAMAP-Rule" id="MF_00195"/>
    </source>
</evidence>
<organism>
    <name type="scientific">Mycoplasmopsis pulmonis (strain UAB CTIP)</name>
    <name type="common">Mycoplasma pulmonis</name>
    <dbReference type="NCBI Taxonomy" id="272635"/>
    <lineage>
        <taxon>Bacteria</taxon>
        <taxon>Bacillati</taxon>
        <taxon>Mycoplasmatota</taxon>
        <taxon>Mycoplasmoidales</taxon>
        <taxon>Metamycoplasmataceae</taxon>
        <taxon>Mycoplasmopsis</taxon>
    </lineage>
</organism>
<accession>Q98RC1</accession>
<name>DER_MYCPU</name>
<comment type="function">
    <text evidence="1">GTPase that plays an essential role in the late steps of ribosome biogenesis.</text>
</comment>
<comment type="subunit">
    <text evidence="1">Associates with the 50S ribosomal subunit.</text>
</comment>
<comment type="similarity">
    <text evidence="1">Belongs to the TRAFAC class TrmE-Era-EngA-EngB-Septin-like GTPase superfamily. EngA (Der) GTPase family.</text>
</comment>